<feature type="chain" id="PRO_0000389177" description="Non-homologous end joining protein Ku">
    <location>
        <begin position="1"/>
        <end position="270"/>
    </location>
</feature>
<feature type="domain" description="Ku" evidence="1">
    <location>
        <begin position="10"/>
        <end position="194"/>
    </location>
</feature>
<evidence type="ECO:0000255" key="1">
    <source>
        <dbReference type="HAMAP-Rule" id="MF_01875"/>
    </source>
</evidence>
<comment type="function">
    <text evidence="1">With LigD forms a non-homologous end joining (NHEJ) DNA repair enzyme, which repairs dsDNA breaks with reduced fidelity. Binds linear dsDNA with 5'- and 3'- overhangs but not closed circular dsDNA nor ssDNA. Recruits and stimulates the ligase activity of LigD.</text>
</comment>
<comment type="subunit">
    <text evidence="1">Homodimer. Interacts with LigD.</text>
</comment>
<comment type="similarity">
    <text evidence="1">Belongs to the prokaryotic Ku family.</text>
</comment>
<organism>
    <name type="scientific">Bacillus thuringiensis subsp. konkukian (strain 97-27)</name>
    <dbReference type="NCBI Taxonomy" id="281309"/>
    <lineage>
        <taxon>Bacteria</taxon>
        <taxon>Bacillati</taxon>
        <taxon>Bacillota</taxon>
        <taxon>Bacilli</taxon>
        <taxon>Bacillales</taxon>
        <taxon>Bacillaceae</taxon>
        <taxon>Bacillus</taxon>
        <taxon>Bacillus cereus group</taxon>
    </lineage>
</organism>
<protein>
    <recommendedName>
        <fullName evidence="1">Non-homologous end joining protein Ku</fullName>
    </recommendedName>
</protein>
<sequence>MHTVWKGALSLGLLNIGIKLYSAVDENDIKFLSLHKECLTPIKYKKFAPDCTDEEVDDKDIVKAYEYAPHKYIIMDEKELSALQKAHEPRSIRIISFIQNNEIDSVLYDRSYFIGPTPGHEKSYLLLKEALERTNKLGLIHISIRKKQHLAIIRNFEDGLMLQTIHYPNEIRDITNIPNLPSNENYPIQKQELTAAINLIHHLTNPFEQELYTDEYKEALTELIENKIEEQAKTESISPAPNIINIMETLQASIEQAKIKRDNKTEKEAK</sequence>
<reference key="1">
    <citation type="journal article" date="2006" name="J. Bacteriol.">
        <title>Pathogenomic sequence analysis of Bacillus cereus and Bacillus thuringiensis isolates closely related to Bacillus anthracis.</title>
        <authorList>
            <person name="Han C.S."/>
            <person name="Xie G."/>
            <person name="Challacombe J.F."/>
            <person name="Altherr M.R."/>
            <person name="Bhotika S.S."/>
            <person name="Bruce D."/>
            <person name="Campbell C.S."/>
            <person name="Campbell M.L."/>
            <person name="Chen J."/>
            <person name="Chertkov O."/>
            <person name="Cleland C."/>
            <person name="Dimitrijevic M."/>
            <person name="Doggett N.A."/>
            <person name="Fawcett J.J."/>
            <person name="Glavina T."/>
            <person name="Goodwin L.A."/>
            <person name="Hill K.K."/>
            <person name="Hitchcock P."/>
            <person name="Jackson P.J."/>
            <person name="Keim P."/>
            <person name="Kewalramani A.R."/>
            <person name="Longmire J."/>
            <person name="Lucas S."/>
            <person name="Malfatti S."/>
            <person name="McMurry K."/>
            <person name="Meincke L.J."/>
            <person name="Misra M."/>
            <person name="Moseman B.L."/>
            <person name="Mundt M."/>
            <person name="Munk A.C."/>
            <person name="Okinaka R.T."/>
            <person name="Parson-Quintana B."/>
            <person name="Reilly L.P."/>
            <person name="Richardson P."/>
            <person name="Robinson D.L."/>
            <person name="Rubin E."/>
            <person name="Saunders E."/>
            <person name="Tapia R."/>
            <person name="Tesmer J.G."/>
            <person name="Thayer N."/>
            <person name="Thompson L.S."/>
            <person name="Tice H."/>
            <person name="Ticknor L.O."/>
            <person name="Wills P.L."/>
            <person name="Brettin T.S."/>
            <person name="Gilna P."/>
        </authorList>
    </citation>
    <scope>NUCLEOTIDE SEQUENCE [LARGE SCALE GENOMIC DNA]</scope>
    <source>
        <strain>97-27</strain>
    </source>
</reference>
<name>KU_BACHK</name>
<keyword id="KW-0227">DNA damage</keyword>
<keyword id="KW-0233">DNA recombination</keyword>
<keyword id="KW-0234">DNA repair</keyword>
<keyword id="KW-0238">DNA-binding</keyword>
<accession>Q6HN08</accession>
<gene>
    <name evidence="1" type="primary">ku</name>
    <name type="ordered locus">BT9727_0719</name>
</gene>
<proteinExistence type="inferred from homology"/>
<dbReference type="EMBL" id="AE017355">
    <property type="protein sequence ID" value="AAT59129.1"/>
    <property type="molecule type" value="Genomic_DNA"/>
</dbReference>
<dbReference type="RefSeq" id="WP_000557715.1">
    <property type="nucleotide sequence ID" value="NC_005957.1"/>
</dbReference>
<dbReference type="RefSeq" id="YP_035063.1">
    <property type="nucleotide sequence ID" value="NC_005957.1"/>
</dbReference>
<dbReference type="SMR" id="Q6HN08"/>
<dbReference type="KEGG" id="btk:BT9727_0719"/>
<dbReference type="PATRIC" id="fig|281309.8.peg.753"/>
<dbReference type="HOGENOM" id="CLU_048975_1_0_9"/>
<dbReference type="Proteomes" id="UP000001301">
    <property type="component" value="Chromosome"/>
</dbReference>
<dbReference type="GO" id="GO:0003690">
    <property type="term" value="F:double-stranded DNA binding"/>
    <property type="evidence" value="ECO:0007669"/>
    <property type="project" value="UniProtKB-UniRule"/>
</dbReference>
<dbReference type="GO" id="GO:0006310">
    <property type="term" value="P:DNA recombination"/>
    <property type="evidence" value="ECO:0007669"/>
    <property type="project" value="UniProtKB-KW"/>
</dbReference>
<dbReference type="GO" id="GO:0006303">
    <property type="term" value="P:double-strand break repair via nonhomologous end joining"/>
    <property type="evidence" value="ECO:0007669"/>
    <property type="project" value="UniProtKB-UniRule"/>
</dbReference>
<dbReference type="CDD" id="cd00789">
    <property type="entry name" value="KU_like"/>
    <property type="match status" value="1"/>
</dbReference>
<dbReference type="FunFam" id="2.40.290.10:FF:000004">
    <property type="entry name" value="Non-homologous end joining protein Ku"/>
    <property type="match status" value="1"/>
</dbReference>
<dbReference type="Gene3D" id="2.40.290.10">
    <property type="match status" value="1"/>
</dbReference>
<dbReference type="HAMAP" id="MF_01875">
    <property type="entry name" value="Prokaryotic_Ku"/>
    <property type="match status" value="1"/>
</dbReference>
<dbReference type="InterPro" id="IPR006164">
    <property type="entry name" value="Ku70/Ku80_beta-barrel_dom"/>
</dbReference>
<dbReference type="InterPro" id="IPR009187">
    <property type="entry name" value="Prok_Ku"/>
</dbReference>
<dbReference type="InterPro" id="IPR016194">
    <property type="entry name" value="SPOC-like_C_dom_sf"/>
</dbReference>
<dbReference type="NCBIfam" id="TIGR02772">
    <property type="entry name" value="Ku_bact"/>
    <property type="match status" value="1"/>
</dbReference>
<dbReference type="PANTHER" id="PTHR41251">
    <property type="entry name" value="NON-HOMOLOGOUS END JOINING PROTEIN KU"/>
    <property type="match status" value="1"/>
</dbReference>
<dbReference type="PANTHER" id="PTHR41251:SF1">
    <property type="entry name" value="NON-HOMOLOGOUS END JOINING PROTEIN KU"/>
    <property type="match status" value="1"/>
</dbReference>
<dbReference type="Pfam" id="PF02735">
    <property type="entry name" value="Ku"/>
    <property type="match status" value="1"/>
</dbReference>
<dbReference type="PIRSF" id="PIRSF006493">
    <property type="entry name" value="Prok_Ku"/>
    <property type="match status" value="1"/>
</dbReference>
<dbReference type="SMART" id="SM00559">
    <property type="entry name" value="Ku78"/>
    <property type="match status" value="1"/>
</dbReference>
<dbReference type="SUPFAM" id="SSF100939">
    <property type="entry name" value="SPOC domain-like"/>
    <property type="match status" value="1"/>
</dbReference>